<comment type="function">
    <text evidence="1">Catalyzes the reversible conversion of 2-phosphoglycerate (2-PG) into phosphoenolpyruvate (PEP). It is essential for the degradation of carbohydrates via glycolysis.</text>
</comment>
<comment type="catalytic activity">
    <reaction evidence="1">
        <text>(2R)-2-phosphoglycerate = phosphoenolpyruvate + H2O</text>
        <dbReference type="Rhea" id="RHEA:10164"/>
        <dbReference type="ChEBI" id="CHEBI:15377"/>
        <dbReference type="ChEBI" id="CHEBI:58289"/>
        <dbReference type="ChEBI" id="CHEBI:58702"/>
        <dbReference type="EC" id="4.2.1.11"/>
    </reaction>
</comment>
<comment type="cofactor">
    <cofactor evidence="1">
        <name>Mg(2+)</name>
        <dbReference type="ChEBI" id="CHEBI:18420"/>
    </cofactor>
    <text evidence="1">Binds a second Mg(2+) ion via substrate during catalysis.</text>
</comment>
<comment type="pathway">
    <text evidence="1">Carbohydrate degradation; glycolysis; pyruvate from D-glyceraldehyde 3-phosphate: step 4/5.</text>
</comment>
<comment type="subunit">
    <text evidence="1">Component of the RNA degradosome, a multiprotein complex involved in RNA processing and mRNA degradation.</text>
</comment>
<comment type="subcellular location">
    <subcellularLocation>
        <location evidence="1">Cytoplasm</location>
    </subcellularLocation>
    <subcellularLocation>
        <location evidence="1">Secreted</location>
    </subcellularLocation>
    <subcellularLocation>
        <location evidence="1">Cell surface</location>
    </subcellularLocation>
    <text evidence="1">Fractions of enolase are present in both the cytoplasm and on the cell surface.</text>
</comment>
<comment type="similarity">
    <text evidence="1">Belongs to the enolase family.</text>
</comment>
<protein>
    <recommendedName>
        <fullName evidence="1">Enolase</fullName>
        <ecNumber evidence="1">4.2.1.11</ecNumber>
    </recommendedName>
    <alternativeName>
        <fullName evidence="1">2-phospho-D-glycerate hydro-lyase</fullName>
    </alternativeName>
    <alternativeName>
        <fullName evidence="1">2-phosphoglycerate dehydratase</fullName>
    </alternativeName>
</protein>
<reference key="1">
    <citation type="journal article" date="2005" name="Genome Res.">
        <title>Coping with cold: the genome of the versatile marine Antarctica bacterium Pseudoalteromonas haloplanktis TAC125.</title>
        <authorList>
            <person name="Medigue C."/>
            <person name="Krin E."/>
            <person name="Pascal G."/>
            <person name="Barbe V."/>
            <person name="Bernsel A."/>
            <person name="Bertin P.N."/>
            <person name="Cheung F."/>
            <person name="Cruveiller S."/>
            <person name="D'Amico S."/>
            <person name="Duilio A."/>
            <person name="Fang G."/>
            <person name="Feller G."/>
            <person name="Ho C."/>
            <person name="Mangenot S."/>
            <person name="Marino G."/>
            <person name="Nilsson J."/>
            <person name="Parrilli E."/>
            <person name="Rocha E.P.C."/>
            <person name="Rouy Z."/>
            <person name="Sekowska A."/>
            <person name="Tutino M.L."/>
            <person name="Vallenet D."/>
            <person name="von Heijne G."/>
            <person name="Danchin A."/>
        </authorList>
    </citation>
    <scope>NUCLEOTIDE SEQUENCE [LARGE SCALE GENOMIC DNA]</scope>
    <source>
        <strain>TAC 125</strain>
    </source>
</reference>
<proteinExistence type="inferred from homology"/>
<keyword id="KW-0963">Cytoplasm</keyword>
<keyword id="KW-0324">Glycolysis</keyword>
<keyword id="KW-0456">Lyase</keyword>
<keyword id="KW-0460">Magnesium</keyword>
<keyword id="KW-0479">Metal-binding</keyword>
<keyword id="KW-1185">Reference proteome</keyword>
<keyword id="KW-0964">Secreted</keyword>
<dbReference type="EC" id="4.2.1.11" evidence="1"/>
<dbReference type="EMBL" id="CR954246">
    <property type="protein sequence ID" value="CAI85825.1"/>
    <property type="molecule type" value="Genomic_DNA"/>
</dbReference>
<dbReference type="SMR" id="Q3IDM2"/>
<dbReference type="STRING" id="326442.PSHAa0742"/>
<dbReference type="KEGG" id="pha:PSHAa0742"/>
<dbReference type="PATRIC" id="fig|326442.8.peg.705"/>
<dbReference type="eggNOG" id="COG0148">
    <property type="taxonomic scope" value="Bacteria"/>
</dbReference>
<dbReference type="HOGENOM" id="CLU_031223_2_1_6"/>
<dbReference type="BioCyc" id="PHAL326442:PSHA_RS03625-MONOMER"/>
<dbReference type="UniPathway" id="UPA00109">
    <property type="reaction ID" value="UER00187"/>
</dbReference>
<dbReference type="Proteomes" id="UP000006843">
    <property type="component" value="Chromosome I"/>
</dbReference>
<dbReference type="GO" id="GO:0009986">
    <property type="term" value="C:cell surface"/>
    <property type="evidence" value="ECO:0007669"/>
    <property type="project" value="UniProtKB-SubCell"/>
</dbReference>
<dbReference type="GO" id="GO:0005576">
    <property type="term" value="C:extracellular region"/>
    <property type="evidence" value="ECO:0007669"/>
    <property type="project" value="UniProtKB-SubCell"/>
</dbReference>
<dbReference type="GO" id="GO:0000015">
    <property type="term" value="C:phosphopyruvate hydratase complex"/>
    <property type="evidence" value="ECO:0007669"/>
    <property type="project" value="InterPro"/>
</dbReference>
<dbReference type="GO" id="GO:0000287">
    <property type="term" value="F:magnesium ion binding"/>
    <property type="evidence" value="ECO:0007669"/>
    <property type="project" value="UniProtKB-UniRule"/>
</dbReference>
<dbReference type="GO" id="GO:0004634">
    <property type="term" value="F:phosphopyruvate hydratase activity"/>
    <property type="evidence" value="ECO:0007669"/>
    <property type="project" value="UniProtKB-UniRule"/>
</dbReference>
<dbReference type="GO" id="GO:0006096">
    <property type="term" value="P:glycolytic process"/>
    <property type="evidence" value="ECO:0007669"/>
    <property type="project" value="UniProtKB-UniRule"/>
</dbReference>
<dbReference type="CDD" id="cd03313">
    <property type="entry name" value="enolase"/>
    <property type="match status" value="1"/>
</dbReference>
<dbReference type="FunFam" id="3.20.20.120:FF:000001">
    <property type="entry name" value="Enolase"/>
    <property type="match status" value="1"/>
</dbReference>
<dbReference type="FunFam" id="3.30.390.10:FF:000001">
    <property type="entry name" value="Enolase"/>
    <property type="match status" value="1"/>
</dbReference>
<dbReference type="Gene3D" id="3.20.20.120">
    <property type="entry name" value="Enolase-like C-terminal domain"/>
    <property type="match status" value="1"/>
</dbReference>
<dbReference type="Gene3D" id="3.30.390.10">
    <property type="entry name" value="Enolase-like, N-terminal domain"/>
    <property type="match status" value="1"/>
</dbReference>
<dbReference type="HAMAP" id="MF_00318">
    <property type="entry name" value="Enolase"/>
    <property type="match status" value="1"/>
</dbReference>
<dbReference type="InterPro" id="IPR000941">
    <property type="entry name" value="Enolase"/>
</dbReference>
<dbReference type="InterPro" id="IPR036849">
    <property type="entry name" value="Enolase-like_C_sf"/>
</dbReference>
<dbReference type="InterPro" id="IPR029017">
    <property type="entry name" value="Enolase-like_N"/>
</dbReference>
<dbReference type="InterPro" id="IPR020810">
    <property type="entry name" value="Enolase_C"/>
</dbReference>
<dbReference type="InterPro" id="IPR020809">
    <property type="entry name" value="Enolase_CS"/>
</dbReference>
<dbReference type="InterPro" id="IPR020811">
    <property type="entry name" value="Enolase_N"/>
</dbReference>
<dbReference type="NCBIfam" id="TIGR01060">
    <property type="entry name" value="eno"/>
    <property type="match status" value="1"/>
</dbReference>
<dbReference type="PANTHER" id="PTHR11902">
    <property type="entry name" value="ENOLASE"/>
    <property type="match status" value="1"/>
</dbReference>
<dbReference type="PANTHER" id="PTHR11902:SF1">
    <property type="entry name" value="ENOLASE"/>
    <property type="match status" value="1"/>
</dbReference>
<dbReference type="Pfam" id="PF00113">
    <property type="entry name" value="Enolase_C"/>
    <property type="match status" value="1"/>
</dbReference>
<dbReference type="Pfam" id="PF03952">
    <property type="entry name" value="Enolase_N"/>
    <property type="match status" value="1"/>
</dbReference>
<dbReference type="PIRSF" id="PIRSF001400">
    <property type="entry name" value="Enolase"/>
    <property type="match status" value="1"/>
</dbReference>
<dbReference type="PRINTS" id="PR00148">
    <property type="entry name" value="ENOLASE"/>
</dbReference>
<dbReference type="SFLD" id="SFLDF00002">
    <property type="entry name" value="enolase"/>
    <property type="match status" value="1"/>
</dbReference>
<dbReference type="SFLD" id="SFLDG00178">
    <property type="entry name" value="enolase"/>
    <property type="match status" value="1"/>
</dbReference>
<dbReference type="SMART" id="SM01192">
    <property type="entry name" value="Enolase_C"/>
    <property type="match status" value="1"/>
</dbReference>
<dbReference type="SMART" id="SM01193">
    <property type="entry name" value="Enolase_N"/>
    <property type="match status" value="1"/>
</dbReference>
<dbReference type="SUPFAM" id="SSF51604">
    <property type="entry name" value="Enolase C-terminal domain-like"/>
    <property type="match status" value="1"/>
</dbReference>
<dbReference type="SUPFAM" id="SSF54826">
    <property type="entry name" value="Enolase N-terminal domain-like"/>
    <property type="match status" value="1"/>
</dbReference>
<dbReference type="PROSITE" id="PS00164">
    <property type="entry name" value="ENOLASE"/>
    <property type="match status" value="1"/>
</dbReference>
<gene>
    <name evidence="1" type="primary">eno</name>
    <name type="ordered locus">PSHAa0742</name>
</gene>
<sequence length="432" mass="46096">MSVIVKVIGREIMDSRGNPTVEADVHLADGSWGRAAAPSGASTGTREALELRDGDKSRYLGKGVLKAVGFINNEIATALAGQNALEQSTVDQVMLDLDGTENKEKLGANAILAVSLATAKAAAQSKKVELYEHIADLNGTPGVYSMPLPMMNIINGGEHADNSVDIQEFMIQPIGAKNFREALRMGAEIFHSLAKVLKADGHSTAVGDEGGFAPNLASNEAALAAIKVAVANAGYELGKDITLALDCAASEFYDKEANIYNLKGEGKKFTSEEFNFFLQDLTQQYPIVSIEDGLDESDWDGFAHQTKLMGDKIQLVGDDLFVTNTKILKRGIDNGIANSILIKFNQIGSLTETLAAIKMAKDAGFTVVISHRSGETEDSTIADLAVGTAAGQIKTGSLSRSDRVAKYNQLLRIEEQLGDKAPYNGLKEVKGQ</sequence>
<organism>
    <name type="scientific">Pseudoalteromonas translucida (strain TAC 125)</name>
    <dbReference type="NCBI Taxonomy" id="326442"/>
    <lineage>
        <taxon>Bacteria</taxon>
        <taxon>Pseudomonadati</taxon>
        <taxon>Pseudomonadota</taxon>
        <taxon>Gammaproteobacteria</taxon>
        <taxon>Alteromonadales</taxon>
        <taxon>Pseudoalteromonadaceae</taxon>
        <taxon>Pseudoalteromonas</taxon>
    </lineage>
</organism>
<name>ENO_PSET1</name>
<feature type="chain" id="PRO_0000267075" description="Enolase">
    <location>
        <begin position="1"/>
        <end position="432"/>
    </location>
</feature>
<feature type="active site" description="Proton donor" evidence="1">
    <location>
        <position position="209"/>
    </location>
</feature>
<feature type="active site" description="Proton acceptor" evidence="1">
    <location>
        <position position="343"/>
    </location>
</feature>
<feature type="binding site" evidence="1">
    <location>
        <position position="167"/>
    </location>
    <ligand>
        <name>(2R)-2-phosphoglycerate</name>
        <dbReference type="ChEBI" id="CHEBI:58289"/>
    </ligand>
</feature>
<feature type="binding site" evidence="1">
    <location>
        <position position="246"/>
    </location>
    <ligand>
        <name>Mg(2+)</name>
        <dbReference type="ChEBI" id="CHEBI:18420"/>
    </ligand>
</feature>
<feature type="binding site" evidence="1">
    <location>
        <position position="291"/>
    </location>
    <ligand>
        <name>Mg(2+)</name>
        <dbReference type="ChEBI" id="CHEBI:18420"/>
    </ligand>
</feature>
<feature type="binding site" evidence="1">
    <location>
        <position position="318"/>
    </location>
    <ligand>
        <name>Mg(2+)</name>
        <dbReference type="ChEBI" id="CHEBI:18420"/>
    </ligand>
</feature>
<feature type="binding site" evidence="1">
    <location>
        <position position="343"/>
    </location>
    <ligand>
        <name>(2R)-2-phosphoglycerate</name>
        <dbReference type="ChEBI" id="CHEBI:58289"/>
    </ligand>
</feature>
<feature type="binding site" evidence="1">
    <location>
        <position position="372"/>
    </location>
    <ligand>
        <name>(2R)-2-phosphoglycerate</name>
        <dbReference type="ChEBI" id="CHEBI:58289"/>
    </ligand>
</feature>
<feature type="binding site" evidence="1">
    <location>
        <position position="373"/>
    </location>
    <ligand>
        <name>(2R)-2-phosphoglycerate</name>
        <dbReference type="ChEBI" id="CHEBI:58289"/>
    </ligand>
</feature>
<feature type="binding site" evidence="1">
    <location>
        <position position="394"/>
    </location>
    <ligand>
        <name>(2R)-2-phosphoglycerate</name>
        <dbReference type="ChEBI" id="CHEBI:58289"/>
    </ligand>
</feature>
<accession>Q3IDM2</accession>
<evidence type="ECO:0000255" key="1">
    <source>
        <dbReference type="HAMAP-Rule" id="MF_00318"/>
    </source>
</evidence>